<protein>
    <recommendedName>
        <fullName evidence="1">Flap endonuclease 1</fullName>
        <shortName evidence="1">FEN-1</shortName>
        <ecNumber evidence="1">3.1.-.-</ecNumber>
    </recommendedName>
    <alternativeName>
        <fullName evidence="1">Flap structure-specific endonuclease 1</fullName>
    </alternativeName>
</protein>
<proteinExistence type="inferred from homology"/>
<reference key="1">
    <citation type="journal article" date="2004" name="Nature">
        <title>Genome evolution in yeasts.</title>
        <authorList>
            <person name="Dujon B."/>
            <person name="Sherman D."/>
            <person name="Fischer G."/>
            <person name="Durrens P."/>
            <person name="Casaregola S."/>
            <person name="Lafontaine I."/>
            <person name="de Montigny J."/>
            <person name="Marck C."/>
            <person name="Neuveglise C."/>
            <person name="Talla E."/>
            <person name="Goffard N."/>
            <person name="Frangeul L."/>
            <person name="Aigle M."/>
            <person name="Anthouard V."/>
            <person name="Babour A."/>
            <person name="Barbe V."/>
            <person name="Barnay S."/>
            <person name="Blanchin S."/>
            <person name="Beckerich J.-M."/>
            <person name="Beyne E."/>
            <person name="Bleykasten C."/>
            <person name="Boisrame A."/>
            <person name="Boyer J."/>
            <person name="Cattolico L."/>
            <person name="Confanioleri F."/>
            <person name="de Daruvar A."/>
            <person name="Despons L."/>
            <person name="Fabre E."/>
            <person name="Fairhead C."/>
            <person name="Ferry-Dumazet H."/>
            <person name="Groppi A."/>
            <person name="Hantraye F."/>
            <person name="Hennequin C."/>
            <person name="Jauniaux N."/>
            <person name="Joyet P."/>
            <person name="Kachouri R."/>
            <person name="Kerrest A."/>
            <person name="Koszul R."/>
            <person name="Lemaire M."/>
            <person name="Lesur I."/>
            <person name="Ma L."/>
            <person name="Muller H."/>
            <person name="Nicaud J.-M."/>
            <person name="Nikolski M."/>
            <person name="Oztas S."/>
            <person name="Ozier-Kalogeropoulos O."/>
            <person name="Pellenz S."/>
            <person name="Potier S."/>
            <person name="Richard G.-F."/>
            <person name="Straub M.-L."/>
            <person name="Suleau A."/>
            <person name="Swennen D."/>
            <person name="Tekaia F."/>
            <person name="Wesolowski-Louvel M."/>
            <person name="Westhof E."/>
            <person name="Wirth B."/>
            <person name="Zeniou-Meyer M."/>
            <person name="Zivanovic Y."/>
            <person name="Bolotin-Fukuhara M."/>
            <person name="Thierry A."/>
            <person name="Bouchier C."/>
            <person name="Caudron B."/>
            <person name="Scarpelli C."/>
            <person name="Gaillardin C."/>
            <person name="Weissenbach J."/>
            <person name="Wincker P."/>
            <person name="Souciet J.-L."/>
        </authorList>
    </citation>
    <scope>NUCLEOTIDE SEQUENCE [LARGE SCALE GENOMIC DNA]</scope>
    <source>
        <strain>ATCC 8585 / CBS 2359 / DSM 70799 / NBRC 1267 / NRRL Y-1140 / WM37</strain>
    </source>
</reference>
<sequence length="381" mass="43183">MGIKNLATLISEQVPNAIKSRDIKYFHGRKVAIDASMSLYQFLIAVRQQDGVQLAGEDGETTSHLMGMFYRTLRMIDHGIKPCYVFDGSPPELKKYELDKRKVRREDTEAKLKEATEQAEIIKHERRLVKVLPWHNEEAQKLLSLMGIPYVVAPAEAEAQCAELAKSGKVFAAASEDMDTLCYQTPVLLRHLTFSEARKLPIQEFDTDVIYNTLDLTQTQFIDLGIILGCDYCEGIKGVGPVNALKLIKEHGSLEAIVEKFENGDISSGRWKIPEGWQFKEARDLFMQPDVIPSEEVTLKWEEPKAEELIEFMVKEKGFNEDRIKSGIERLRKGLKVGVQKRLDSFFKIQPKTKEELATAAKKAKDAKKKAAAKGKIAKRR</sequence>
<comment type="function">
    <text evidence="1">Structure-specific nuclease with 5'-flap endonuclease and 5'-3' exonuclease activities involved in DNA replication and repair. During DNA replication, cleaves the 5'-overhanging flap structure that is generated by displacement synthesis when DNA polymerase encounters the 5'-end of a downstream Okazaki fragment. It enters the flap from the 5'-end and then tracks to cleave the flap base, leaving a nick for ligation. Also involved in the long patch base excision repair (LP-BER) pathway, by cleaving within the apurinic/apyrimidinic (AP) site-terminated flap. Acts as a genome stabilization factor that prevents flaps from equilibrating into structures that lead to duplications and deletions. Also possesses 5'-3' exonuclease activity on nicked or gapped double-stranded DNA, and exhibits RNase H activity. Also involved in replication and repair of rDNA and in repairing mitochondrial DNA.</text>
</comment>
<comment type="cofactor">
    <cofactor evidence="1">
        <name>Mg(2+)</name>
        <dbReference type="ChEBI" id="CHEBI:18420"/>
    </cofactor>
    <text evidence="1">Binds 2 magnesium ions per subunit. They probably participate in the reaction catalyzed by the enzyme. May bind an additional third magnesium ion after substrate binding.</text>
</comment>
<comment type="subunit">
    <text evidence="1">Interacts with PCNA. Three molecules of FEN1 bind to one PCNA trimer with each molecule binding to one PCNA monomer. PCNA stimulates the nuclease activity without altering cleavage specificity.</text>
</comment>
<comment type="subcellular location">
    <subcellularLocation>
        <location evidence="1">Nucleus</location>
        <location evidence="1">Nucleolus</location>
    </subcellularLocation>
    <subcellularLocation>
        <location evidence="1">Nucleus</location>
        <location evidence="1">Nucleoplasm</location>
    </subcellularLocation>
    <subcellularLocation>
        <location evidence="1">Mitochondrion</location>
    </subcellularLocation>
    <text evidence="1">Resides mostly in the nucleoli and relocalizes to the nucleoplasm upon DNA damage.</text>
</comment>
<comment type="PTM">
    <text evidence="1">Phosphorylated. Phosphorylation upon DNA damage induces relocalization to the nuclear plasma.</text>
</comment>
<comment type="similarity">
    <text evidence="1">Belongs to the XPG/RAD2 endonuclease family. FEN1 subfamily.</text>
</comment>
<name>FEN1_KLULA</name>
<evidence type="ECO:0000255" key="1">
    <source>
        <dbReference type="HAMAP-Rule" id="MF_03140"/>
    </source>
</evidence>
<evidence type="ECO:0000256" key="2">
    <source>
        <dbReference type="SAM" id="MobiDB-lite"/>
    </source>
</evidence>
<feature type="chain" id="PRO_0000403579" description="Flap endonuclease 1">
    <location>
        <begin position="1"/>
        <end position="381"/>
    </location>
</feature>
<feature type="region of interest" description="N-domain">
    <location>
        <begin position="1"/>
        <end position="105"/>
    </location>
</feature>
<feature type="region of interest" description="I-domain">
    <location>
        <begin position="120"/>
        <end position="251"/>
    </location>
</feature>
<feature type="region of interest" description="Interaction with PCNA" evidence="1">
    <location>
        <begin position="339"/>
        <end position="347"/>
    </location>
</feature>
<feature type="region of interest" description="Disordered" evidence="2">
    <location>
        <begin position="360"/>
        <end position="381"/>
    </location>
</feature>
<feature type="compositionally biased region" description="Basic residues" evidence="2">
    <location>
        <begin position="365"/>
        <end position="381"/>
    </location>
</feature>
<feature type="binding site" evidence="1">
    <location>
        <position position="34"/>
    </location>
    <ligand>
        <name>Mg(2+)</name>
        <dbReference type="ChEBI" id="CHEBI:18420"/>
        <label>1</label>
    </ligand>
</feature>
<feature type="binding site" evidence="1">
    <location>
        <position position="47"/>
    </location>
    <ligand>
        <name>DNA</name>
        <dbReference type="ChEBI" id="CHEBI:16991"/>
    </ligand>
</feature>
<feature type="binding site" evidence="1">
    <location>
        <position position="71"/>
    </location>
    <ligand>
        <name>DNA</name>
        <dbReference type="ChEBI" id="CHEBI:16991"/>
    </ligand>
</feature>
<feature type="binding site" evidence="1">
    <location>
        <position position="87"/>
    </location>
    <ligand>
        <name>Mg(2+)</name>
        <dbReference type="ChEBI" id="CHEBI:18420"/>
        <label>1</label>
    </ligand>
</feature>
<feature type="binding site" evidence="1">
    <location>
        <position position="156"/>
    </location>
    <ligand>
        <name>DNA</name>
        <dbReference type="ChEBI" id="CHEBI:16991"/>
    </ligand>
</feature>
<feature type="binding site" evidence="1">
    <location>
        <position position="156"/>
    </location>
    <ligand>
        <name>Mg(2+)</name>
        <dbReference type="ChEBI" id="CHEBI:18420"/>
        <label>1</label>
    </ligand>
</feature>
<feature type="binding site" evidence="1">
    <location>
        <position position="158"/>
    </location>
    <ligand>
        <name>Mg(2+)</name>
        <dbReference type="ChEBI" id="CHEBI:18420"/>
        <label>1</label>
    </ligand>
</feature>
<feature type="binding site" evidence="1">
    <location>
        <position position="177"/>
    </location>
    <ligand>
        <name>Mg(2+)</name>
        <dbReference type="ChEBI" id="CHEBI:18420"/>
        <label>2</label>
    </ligand>
</feature>
<feature type="binding site" evidence="1">
    <location>
        <position position="179"/>
    </location>
    <ligand>
        <name>Mg(2+)</name>
        <dbReference type="ChEBI" id="CHEBI:18420"/>
        <label>2</label>
    </ligand>
</feature>
<feature type="binding site" evidence="1">
    <location>
        <position position="229"/>
    </location>
    <ligand>
        <name>DNA</name>
        <dbReference type="ChEBI" id="CHEBI:16991"/>
    </ligand>
</feature>
<feature type="binding site" evidence="1">
    <location>
        <position position="231"/>
    </location>
    <ligand>
        <name>DNA</name>
        <dbReference type="ChEBI" id="CHEBI:16991"/>
    </ligand>
</feature>
<feature type="binding site" evidence="1">
    <location>
        <position position="231"/>
    </location>
    <ligand>
        <name>Mg(2+)</name>
        <dbReference type="ChEBI" id="CHEBI:18420"/>
        <label>2</label>
    </ligand>
</feature>
<gene>
    <name evidence="1" type="primary">FEN1</name>
    <name type="ordered locus">KLLA0F02992g</name>
</gene>
<organism>
    <name type="scientific">Kluyveromyces lactis (strain ATCC 8585 / CBS 2359 / DSM 70799 / NBRC 1267 / NRRL Y-1140 / WM37)</name>
    <name type="common">Yeast</name>
    <name type="synonym">Candida sphaerica</name>
    <dbReference type="NCBI Taxonomy" id="284590"/>
    <lineage>
        <taxon>Eukaryota</taxon>
        <taxon>Fungi</taxon>
        <taxon>Dikarya</taxon>
        <taxon>Ascomycota</taxon>
        <taxon>Saccharomycotina</taxon>
        <taxon>Saccharomycetes</taxon>
        <taxon>Saccharomycetales</taxon>
        <taxon>Saccharomycetaceae</taxon>
        <taxon>Kluyveromyces</taxon>
    </lineage>
</organism>
<keyword id="KW-0227">DNA damage</keyword>
<keyword id="KW-0234">DNA repair</keyword>
<keyword id="KW-0235">DNA replication</keyword>
<keyword id="KW-0255">Endonuclease</keyword>
<keyword id="KW-0269">Exonuclease</keyword>
<keyword id="KW-0378">Hydrolase</keyword>
<keyword id="KW-0460">Magnesium</keyword>
<keyword id="KW-0479">Metal-binding</keyword>
<keyword id="KW-0496">Mitochondrion</keyword>
<keyword id="KW-0540">Nuclease</keyword>
<keyword id="KW-0539">Nucleus</keyword>
<keyword id="KW-0597">Phosphoprotein</keyword>
<keyword id="KW-1185">Reference proteome</keyword>
<accession>Q6CLH4</accession>
<dbReference type="EC" id="3.1.-.-" evidence="1"/>
<dbReference type="EMBL" id="CR382126">
    <property type="protein sequence ID" value="CAG97923.1"/>
    <property type="molecule type" value="Genomic_DNA"/>
</dbReference>
<dbReference type="RefSeq" id="XP_455215.1">
    <property type="nucleotide sequence ID" value="XM_455215.1"/>
</dbReference>
<dbReference type="SMR" id="Q6CLH4"/>
<dbReference type="FunCoup" id="Q6CLH4">
    <property type="interactions" value="1110"/>
</dbReference>
<dbReference type="STRING" id="284590.Q6CLH4"/>
<dbReference type="PaxDb" id="284590-Q6CLH4"/>
<dbReference type="KEGG" id="kla:KLLA0_F02992g"/>
<dbReference type="eggNOG" id="KOG2519">
    <property type="taxonomic scope" value="Eukaryota"/>
</dbReference>
<dbReference type="HOGENOM" id="CLU_032444_2_0_1"/>
<dbReference type="InParanoid" id="Q6CLH4"/>
<dbReference type="OMA" id="MGIPWVQ"/>
<dbReference type="Proteomes" id="UP000000598">
    <property type="component" value="Chromosome F"/>
</dbReference>
<dbReference type="GO" id="GO:0005739">
    <property type="term" value="C:mitochondrion"/>
    <property type="evidence" value="ECO:0007669"/>
    <property type="project" value="UniProtKB-SubCell"/>
</dbReference>
<dbReference type="GO" id="GO:0005730">
    <property type="term" value="C:nucleolus"/>
    <property type="evidence" value="ECO:0007669"/>
    <property type="project" value="UniProtKB-SubCell"/>
</dbReference>
<dbReference type="GO" id="GO:0005654">
    <property type="term" value="C:nucleoplasm"/>
    <property type="evidence" value="ECO:0007669"/>
    <property type="project" value="UniProtKB-SubCell"/>
</dbReference>
<dbReference type="GO" id="GO:0008409">
    <property type="term" value="F:5'-3' exonuclease activity"/>
    <property type="evidence" value="ECO:0007669"/>
    <property type="project" value="UniProtKB-UniRule"/>
</dbReference>
<dbReference type="GO" id="GO:0017108">
    <property type="term" value="F:5'-flap endonuclease activity"/>
    <property type="evidence" value="ECO:0007669"/>
    <property type="project" value="UniProtKB-UniRule"/>
</dbReference>
<dbReference type="GO" id="GO:0003677">
    <property type="term" value="F:DNA binding"/>
    <property type="evidence" value="ECO:0007669"/>
    <property type="project" value="UniProtKB-UniRule"/>
</dbReference>
<dbReference type="GO" id="GO:0000287">
    <property type="term" value="F:magnesium ion binding"/>
    <property type="evidence" value="ECO:0007669"/>
    <property type="project" value="UniProtKB-UniRule"/>
</dbReference>
<dbReference type="GO" id="GO:0006284">
    <property type="term" value="P:base-excision repair"/>
    <property type="evidence" value="ECO:0007669"/>
    <property type="project" value="UniProtKB-UniRule"/>
</dbReference>
<dbReference type="GO" id="GO:0043137">
    <property type="term" value="P:DNA replication, removal of RNA primer"/>
    <property type="evidence" value="ECO:0007669"/>
    <property type="project" value="UniProtKB-UniRule"/>
</dbReference>
<dbReference type="CDD" id="cd09907">
    <property type="entry name" value="H3TH_FEN1-Euk"/>
    <property type="match status" value="1"/>
</dbReference>
<dbReference type="CDD" id="cd09867">
    <property type="entry name" value="PIN_FEN1"/>
    <property type="match status" value="1"/>
</dbReference>
<dbReference type="FunFam" id="1.10.150.20:FF:000009">
    <property type="entry name" value="Flap endonuclease 1"/>
    <property type="match status" value="1"/>
</dbReference>
<dbReference type="FunFam" id="3.40.50.1010:FF:000003">
    <property type="entry name" value="Flap endonuclease 1"/>
    <property type="match status" value="1"/>
</dbReference>
<dbReference type="Gene3D" id="1.10.150.20">
    <property type="entry name" value="5' to 3' exonuclease, C-terminal subdomain"/>
    <property type="match status" value="1"/>
</dbReference>
<dbReference type="Gene3D" id="3.40.50.1010">
    <property type="entry name" value="5'-nuclease"/>
    <property type="match status" value="1"/>
</dbReference>
<dbReference type="HAMAP" id="MF_00614">
    <property type="entry name" value="Fen"/>
    <property type="match status" value="1"/>
</dbReference>
<dbReference type="InterPro" id="IPR036279">
    <property type="entry name" value="5-3_exonuclease_C_sf"/>
</dbReference>
<dbReference type="InterPro" id="IPR023426">
    <property type="entry name" value="Flap_endonuc"/>
</dbReference>
<dbReference type="InterPro" id="IPR008918">
    <property type="entry name" value="HhH2"/>
</dbReference>
<dbReference type="InterPro" id="IPR029060">
    <property type="entry name" value="PIN-like_dom_sf"/>
</dbReference>
<dbReference type="InterPro" id="IPR006086">
    <property type="entry name" value="XPG-I_dom"/>
</dbReference>
<dbReference type="InterPro" id="IPR006084">
    <property type="entry name" value="XPG/Rad2"/>
</dbReference>
<dbReference type="InterPro" id="IPR019974">
    <property type="entry name" value="XPG_CS"/>
</dbReference>
<dbReference type="InterPro" id="IPR006085">
    <property type="entry name" value="XPG_DNA_repair_N"/>
</dbReference>
<dbReference type="PANTHER" id="PTHR11081:SF9">
    <property type="entry name" value="FLAP ENDONUCLEASE 1"/>
    <property type="match status" value="1"/>
</dbReference>
<dbReference type="PANTHER" id="PTHR11081">
    <property type="entry name" value="FLAP ENDONUCLEASE FAMILY MEMBER"/>
    <property type="match status" value="1"/>
</dbReference>
<dbReference type="Pfam" id="PF00867">
    <property type="entry name" value="XPG_I"/>
    <property type="match status" value="1"/>
</dbReference>
<dbReference type="Pfam" id="PF00752">
    <property type="entry name" value="XPG_N"/>
    <property type="match status" value="1"/>
</dbReference>
<dbReference type="PRINTS" id="PR00853">
    <property type="entry name" value="XPGRADSUPER"/>
</dbReference>
<dbReference type="SMART" id="SM00279">
    <property type="entry name" value="HhH2"/>
    <property type="match status" value="1"/>
</dbReference>
<dbReference type="SMART" id="SM00484">
    <property type="entry name" value="XPGI"/>
    <property type="match status" value="1"/>
</dbReference>
<dbReference type="SMART" id="SM00485">
    <property type="entry name" value="XPGN"/>
    <property type="match status" value="1"/>
</dbReference>
<dbReference type="SUPFAM" id="SSF47807">
    <property type="entry name" value="5' to 3' exonuclease, C-terminal subdomain"/>
    <property type="match status" value="1"/>
</dbReference>
<dbReference type="SUPFAM" id="SSF88723">
    <property type="entry name" value="PIN domain-like"/>
    <property type="match status" value="1"/>
</dbReference>
<dbReference type="PROSITE" id="PS00841">
    <property type="entry name" value="XPG_1"/>
    <property type="match status" value="1"/>
</dbReference>
<dbReference type="PROSITE" id="PS00842">
    <property type="entry name" value="XPG_2"/>
    <property type="match status" value="1"/>
</dbReference>